<geneLocation type="plasmid">
    <name>sym pNGR234a</name>
</geneLocation>
<feature type="chain" id="PRO_0000200923" description="Uncharacterized protein y4oB">
    <location>
        <begin position="1"/>
        <end position="129"/>
    </location>
</feature>
<sequence>MTEPVRGSSPSSDSARVPAELEAFFRIADRWRLSADDQIKLLGSPGRSTFFKWKKAGGTLPADTVERLSHILSIWKALRILFTIEERADDWIRRPNDFFDGASALDTMLQGRVVDIYRVRQYLDAQRGG</sequence>
<protein>
    <recommendedName>
        <fullName>Uncharacterized protein y4oB</fullName>
    </recommendedName>
</protein>
<reference key="1">
    <citation type="journal article" date="1997" name="Nature">
        <title>Molecular basis of symbiosis between Rhizobium and legumes.</title>
        <authorList>
            <person name="Freiberg C.A."/>
            <person name="Fellay R."/>
            <person name="Bairoch A."/>
            <person name="Broughton W.J."/>
            <person name="Rosenthal A."/>
            <person name="Perret X."/>
        </authorList>
    </citation>
    <scope>NUCLEOTIDE SEQUENCE [LARGE SCALE GENOMIC DNA]</scope>
    <source>
        <strain>NBRC 101917 / NGR234</strain>
    </source>
</reference>
<reference key="2">
    <citation type="journal article" date="2009" name="Appl. Environ. Microbiol.">
        <title>Rhizobium sp. strain NGR234 possesses a remarkable number of secretion systems.</title>
        <authorList>
            <person name="Schmeisser C."/>
            <person name="Liesegang H."/>
            <person name="Krysciak D."/>
            <person name="Bakkou N."/>
            <person name="Le Quere A."/>
            <person name="Wollherr A."/>
            <person name="Heinemeyer I."/>
            <person name="Morgenstern B."/>
            <person name="Pommerening-Roeser A."/>
            <person name="Flores M."/>
            <person name="Palacios R."/>
            <person name="Brenner S."/>
            <person name="Gottschalk G."/>
            <person name="Schmitz R.A."/>
            <person name="Broughton W.J."/>
            <person name="Perret X."/>
            <person name="Strittmatter A.W."/>
            <person name="Streit W.R."/>
        </authorList>
    </citation>
    <scope>NUCLEOTIDE SEQUENCE [LARGE SCALE GENOMIC DNA]</scope>
    <source>
        <strain>NBRC 101917 / NGR234</strain>
    </source>
</reference>
<dbReference type="EMBL" id="U00090">
    <property type="protein sequence ID" value="AAB91795.1"/>
    <property type="molecule type" value="Genomic_DNA"/>
</dbReference>
<dbReference type="RefSeq" id="NP_443998.1">
    <property type="nucleotide sequence ID" value="NC_000914.2"/>
</dbReference>
<dbReference type="RefSeq" id="WP_010875254.1">
    <property type="nucleotide sequence ID" value="NC_000914.2"/>
</dbReference>
<dbReference type="SMR" id="P55587"/>
<dbReference type="KEGG" id="rhi:NGR_a02270"/>
<dbReference type="eggNOG" id="COG5642">
    <property type="taxonomic scope" value="Bacteria"/>
</dbReference>
<dbReference type="HOGENOM" id="CLU_123925_0_0_5"/>
<dbReference type="OrthoDB" id="117888at2"/>
<dbReference type="Proteomes" id="UP000001054">
    <property type="component" value="Plasmid pNGR234a"/>
</dbReference>
<dbReference type="GO" id="GO:0003677">
    <property type="term" value="F:DNA binding"/>
    <property type="evidence" value="ECO:0007669"/>
    <property type="project" value="InterPro"/>
</dbReference>
<dbReference type="InterPro" id="IPR046847">
    <property type="entry name" value="Xre-like_HTH"/>
</dbReference>
<dbReference type="InterPro" id="IPR024467">
    <property type="entry name" value="Xre/MbcA/ParS-like_toxin-bd"/>
</dbReference>
<dbReference type="Pfam" id="PF20432">
    <property type="entry name" value="Xre-like-HTH"/>
    <property type="match status" value="1"/>
</dbReference>
<dbReference type="Pfam" id="PF09722">
    <property type="entry name" value="Xre_MbcA_ParS_C"/>
    <property type="match status" value="1"/>
</dbReference>
<proteinExistence type="predicted"/>
<gene>
    <name type="ordered locus">NGR_a02270</name>
    <name type="ORF">y4oB</name>
</gene>
<name>Y4OB_SINFN</name>
<accession>P55587</accession>
<organism>
    <name type="scientific">Sinorhizobium fredii (strain NBRC 101917 / NGR234)</name>
    <dbReference type="NCBI Taxonomy" id="394"/>
    <lineage>
        <taxon>Bacteria</taxon>
        <taxon>Pseudomonadati</taxon>
        <taxon>Pseudomonadota</taxon>
        <taxon>Alphaproteobacteria</taxon>
        <taxon>Hyphomicrobiales</taxon>
        <taxon>Rhizobiaceae</taxon>
        <taxon>Sinorhizobium/Ensifer group</taxon>
        <taxon>Sinorhizobium</taxon>
    </lineage>
</organism>
<keyword id="KW-0614">Plasmid</keyword>
<keyword id="KW-1185">Reference proteome</keyword>